<gene>
    <name evidence="1" type="primary">rpoC</name>
    <name type="ordered locus">KRH_06020</name>
</gene>
<organism>
    <name type="scientific">Kocuria rhizophila (strain ATCC 9341 / DSM 348 / NBRC 103217 / DC2201)</name>
    <dbReference type="NCBI Taxonomy" id="378753"/>
    <lineage>
        <taxon>Bacteria</taxon>
        <taxon>Bacillati</taxon>
        <taxon>Actinomycetota</taxon>
        <taxon>Actinomycetes</taxon>
        <taxon>Micrococcales</taxon>
        <taxon>Micrococcaceae</taxon>
        <taxon>Kocuria</taxon>
    </lineage>
</organism>
<name>RPOC_KOCRD</name>
<proteinExistence type="inferred from homology"/>
<protein>
    <recommendedName>
        <fullName evidence="1">DNA-directed RNA polymerase subunit beta'</fullName>
        <shortName evidence="1">RNAP subunit beta'</shortName>
        <ecNumber evidence="1">2.7.7.6</ecNumber>
    </recommendedName>
    <alternativeName>
        <fullName evidence="1">RNA polymerase subunit beta'</fullName>
    </alternativeName>
    <alternativeName>
        <fullName evidence="1">Transcriptase subunit beta'</fullName>
    </alternativeName>
</protein>
<evidence type="ECO:0000255" key="1">
    <source>
        <dbReference type="HAMAP-Rule" id="MF_01322"/>
    </source>
</evidence>
<evidence type="ECO:0000256" key="2">
    <source>
        <dbReference type="SAM" id="MobiDB-lite"/>
    </source>
</evidence>
<sequence length="1296" mass="143320">MSNDSSLGLMQIGLATADQIRGWSYGEVKKPETINYRTLKPEKDGLFCEKIFGPTRDWECYCGKYKRVRYKGIICERCGVEVTRAKVRRERMGHIELAAPVTHIWYFKGVPSRLGYLLDLAPKDLEKVIYFAAYMITSVDEQARHDDLPNLQAAIDREKKQLEDTRDADINAIARDLENDLARVEEEGGKAAEKRKLRDSADRQMANVRKRADREIDYLEKVWDRFKNLKVNDLEGDEALYRQMVDRYGMYFEGSMGAESIKKRLETFDLAAEAEALRETIATGKGQRKTRALKRLKVVNAFLTTDNSPLGMVLDAVPVIPPELRPMVQLDGGRFATSDLNDLYRRVINRNNRLKRLLDLGAPEIIVNNEKRMLQEAVDSLFDNGRRGRPVTGPGNRALKSLSDMLKGKQGRFRQNLLGKRVDYSGRSVIVVGPQLKLHQCGLPKQMALELFKPFVMKRLVDLNHAQNIKSAKRMVERYRPQVWDVLEEVITEHPVLLNRAPTLHRLGIQAFEPQLVEGKAIQLHPLVCGAFNADFDGDQMAVHLPLSPEAQAEARVLMLSSNNILKPSDGKPIALPSQDMIIGLYHLTTVREGWAGEGNTYSSVAEAIMANDSGELHLNAKCKIRLEDFVPYAGWEAPEGWEPGQPAVVETTLGRVLFNETLPEDYPWDENVADKKHLSALVNDLAERYPMTRVAKTLDNLKDAGFHWASRSGVTVAISDIATPPEKPAIMEGYEAQAARIQGQYDKGLIDDDERRSELIDIWSKATDEVAQAMRDNLEPTNTINRMVSSGARGNWMQVRQIAGIRGLVANPKGEIMPRPIKSSYREGLSVLEYFIATHGARKGLADTALRTANSGYLTRRLVDVSQDVIVRESDCQTVRGLTLPLSDITDTGVRTLSEDVENTVHGRVLASAVADENGEVLAEAGADMSDAMIEKLYAAGVDQVRVRSVLTCESAVGVCAACYGRSLATNQLVDIGEAVGIVAAQSIGEPGTQLTMRTFHTGGVASSDGDITQGLPRIQELFEARTPKGVAPISEVAGRIRIEDTDKSLKIVVVPDNGDEEFAYPVLRRAKLLVADGDHVDVGQQLVTGAVDPKEVLRIRGPREAQKHLVDEVQGVYRSQGVGIHDKHVEVIVRQMLRRVTIIESGDTSLLPGELVDNVRFLEANRGAVAEGKRPAAGRPELMGITKASLATDSWLSAASFQETTRVLTQAAMEGKSDPLLGLKENVIIGKLIPAGTGLDRYNSVDVEPTEEAKAQMFTDPSAFADFSYAEENAGGLGSEFQAIPLDDYDFGGN</sequence>
<dbReference type="EC" id="2.7.7.6" evidence="1"/>
<dbReference type="EMBL" id="AP009152">
    <property type="protein sequence ID" value="BAG28949.1"/>
    <property type="molecule type" value="Genomic_DNA"/>
</dbReference>
<dbReference type="RefSeq" id="WP_012397675.1">
    <property type="nucleotide sequence ID" value="NZ_VECX01000001.1"/>
</dbReference>
<dbReference type="SMR" id="B2GIK0"/>
<dbReference type="STRING" id="378753.KRH_06020"/>
<dbReference type="KEGG" id="krh:KRH_06020"/>
<dbReference type="eggNOG" id="COG0086">
    <property type="taxonomic scope" value="Bacteria"/>
</dbReference>
<dbReference type="HOGENOM" id="CLU_000524_3_1_11"/>
<dbReference type="OrthoDB" id="9815296at2"/>
<dbReference type="Proteomes" id="UP000008838">
    <property type="component" value="Chromosome"/>
</dbReference>
<dbReference type="GO" id="GO:0000428">
    <property type="term" value="C:DNA-directed RNA polymerase complex"/>
    <property type="evidence" value="ECO:0007669"/>
    <property type="project" value="UniProtKB-KW"/>
</dbReference>
<dbReference type="GO" id="GO:0003677">
    <property type="term" value="F:DNA binding"/>
    <property type="evidence" value="ECO:0007669"/>
    <property type="project" value="UniProtKB-UniRule"/>
</dbReference>
<dbReference type="GO" id="GO:0003899">
    <property type="term" value="F:DNA-directed RNA polymerase activity"/>
    <property type="evidence" value="ECO:0007669"/>
    <property type="project" value="UniProtKB-UniRule"/>
</dbReference>
<dbReference type="GO" id="GO:0000287">
    <property type="term" value="F:magnesium ion binding"/>
    <property type="evidence" value="ECO:0007669"/>
    <property type="project" value="UniProtKB-UniRule"/>
</dbReference>
<dbReference type="GO" id="GO:0008270">
    <property type="term" value="F:zinc ion binding"/>
    <property type="evidence" value="ECO:0007669"/>
    <property type="project" value="UniProtKB-UniRule"/>
</dbReference>
<dbReference type="GO" id="GO:0006351">
    <property type="term" value="P:DNA-templated transcription"/>
    <property type="evidence" value="ECO:0007669"/>
    <property type="project" value="UniProtKB-UniRule"/>
</dbReference>
<dbReference type="CDD" id="cd02655">
    <property type="entry name" value="RNAP_beta'_C"/>
    <property type="match status" value="1"/>
</dbReference>
<dbReference type="CDD" id="cd01609">
    <property type="entry name" value="RNAP_beta'_N"/>
    <property type="match status" value="1"/>
</dbReference>
<dbReference type="FunFam" id="1.10.150.390:FF:000002">
    <property type="entry name" value="DNA-directed RNA polymerase subunit beta"/>
    <property type="match status" value="1"/>
</dbReference>
<dbReference type="FunFam" id="1.10.40.90:FF:000001">
    <property type="entry name" value="DNA-directed RNA polymerase subunit beta"/>
    <property type="match status" value="1"/>
</dbReference>
<dbReference type="FunFam" id="4.10.860.120:FF:000001">
    <property type="entry name" value="DNA-directed RNA polymerase subunit beta"/>
    <property type="match status" value="1"/>
</dbReference>
<dbReference type="Gene3D" id="1.10.132.30">
    <property type="match status" value="1"/>
</dbReference>
<dbReference type="Gene3D" id="1.10.150.390">
    <property type="match status" value="1"/>
</dbReference>
<dbReference type="Gene3D" id="1.10.1790.20">
    <property type="match status" value="1"/>
</dbReference>
<dbReference type="Gene3D" id="1.10.40.90">
    <property type="match status" value="1"/>
</dbReference>
<dbReference type="Gene3D" id="2.40.40.20">
    <property type="match status" value="1"/>
</dbReference>
<dbReference type="Gene3D" id="2.40.50.100">
    <property type="match status" value="1"/>
</dbReference>
<dbReference type="Gene3D" id="4.10.860.120">
    <property type="entry name" value="RNA polymerase II, clamp domain"/>
    <property type="match status" value="1"/>
</dbReference>
<dbReference type="Gene3D" id="1.10.274.100">
    <property type="entry name" value="RNA polymerase Rpb1, domain 3"/>
    <property type="match status" value="2"/>
</dbReference>
<dbReference type="HAMAP" id="MF_01322">
    <property type="entry name" value="RNApol_bact_RpoC"/>
    <property type="match status" value="1"/>
</dbReference>
<dbReference type="InterPro" id="IPR045867">
    <property type="entry name" value="DNA-dir_RpoC_beta_prime"/>
</dbReference>
<dbReference type="InterPro" id="IPR012754">
    <property type="entry name" value="DNA-dir_RpoC_beta_prime_bact"/>
</dbReference>
<dbReference type="InterPro" id="IPR000722">
    <property type="entry name" value="RNA_pol_asu"/>
</dbReference>
<dbReference type="InterPro" id="IPR006592">
    <property type="entry name" value="RNA_pol_N"/>
</dbReference>
<dbReference type="InterPro" id="IPR007080">
    <property type="entry name" value="RNA_pol_Rpb1_1"/>
</dbReference>
<dbReference type="InterPro" id="IPR007066">
    <property type="entry name" value="RNA_pol_Rpb1_3"/>
</dbReference>
<dbReference type="InterPro" id="IPR042102">
    <property type="entry name" value="RNA_pol_Rpb1_3_sf"/>
</dbReference>
<dbReference type="InterPro" id="IPR007083">
    <property type="entry name" value="RNA_pol_Rpb1_4"/>
</dbReference>
<dbReference type="InterPro" id="IPR007081">
    <property type="entry name" value="RNA_pol_Rpb1_5"/>
</dbReference>
<dbReference type="InterPro" id="IPR044893">
    <property type="entry name" value="RNA_pol_Rpb1_clamp_domain"/>
</dbReference>
<dbReference type="InterPro" id="IPR038120">
    <property type="entry name" value="Rpb1_funnel_sf"/>
</dbReference>
<dbReference type="NCBIfam" id="NF011498">
    <property type="entry name" value="PRK14906.1"/>
    <property type="match status" value="1"/>
</dbReference>
<dbReference type="NCBIfam" id="TIGR02386">
    <property type="entry name" value="rpoC_TIGR"/>
    <property type="match status" value="1"/>
</dbReference>
<dbReference type="PANTHER" id="PTHR19376">
    <property type="entry name" value="DNA-DIRECTED RNA POLYMERASE"/>
    <property type="match status" value="1"/>
</dbReference>
<dbReference type="PANTHER" id="PTHR19376:SF54">
    <property type="entry name" value="DNA-DIRECTED RNA POLYMERASE SUBUNIT BETA"/>
    <property type="match status" value="1"/>
</dbReference>
<dbReference type="Pfam" id="PF04997">
    <property type="entry name" value="RNA_pol_Rpb1_1"/>
    <property type="match status" value="1"/>
</dbReference>
<dbReference type="Pfam" id="PF00623">
    <property type="entry name" value="RNA_pol_Rpb1_2"/>
    <property type="match status" value="1"/>
</dbReference>
<dbReference type="Pfam" id="PF04983">
    <property type="entry name" value="RNA_pol_Rpb1_3"/>
    <property type="match status" value="1"/>
</dbReference>
<dbReference type="Pfam" id="PF05000">
    <property type="entry name" value="RNA_pol_Rpb1_4"/>
    <property type="match status" value="1"/>
</dbReference>
<dbReference type="Pfam" id="PF04998">
    <property type="entry name" value="RNA_pol_Rpb1_5"/>
    <property type="match status" value="1"/>
</dbReference>
<dbReference type="SMART" id="SM00663">
    <property type="entry name" value="RPOLA_N"/>
    <property type="match status" value="1"/>
</dbReference>
<dbReference type="SUPFAM" id="SSF64484">
    <property type="entry name" value="beta and beta-prime subunits of DNA dependent RNA-polymerase"/>
    <property type="match status" value="1"/>
</dbReference>
<comment type="function">
    <text evidence="1">DNA-dependent RNA polymerase catalyzes the transcription of DNA into RNA using the four ribonucleoside triphosphates as substrates.</text>
</comment>
<comment type="catalytic activity">
    <reaction evidence="1">
        <text>RNA(n) + a ribonucleoside 5'-triphosphate = RNA(n+1) + diphosphate</text>
        <dbReference type="Rhea" id="RHEA:21248"/>
        <dbReference type="Rhea" id="RHEA-COMP:14527"/>
        <dbReference type="Rhea" id="RHEA-COMP:17342"/>
        <dbReference type="ChEBI" id="CHEBI:33019"/>
        <dbReference type="ChEBI" id="CHEBI:61557"/>
        <dbReference type="ChEBI" id="CHEBI:140395"/>
        <dbReference type="EC" id="2.7.7.6"/>
    </reaction>
</comment>
<comment type="cofactor">
    <cofactor evidence="1">
        <name>Mg(2+)</name>
        <dbReference type="ChEBI" id="CHEBI:18420"/>
    </cofactor>
    <text evidence="1">Binds 1 Mg(2+) ion per subunit.</text>
</comment>
<comment type="cofactor">
    <cofactor evidence="1">
        <name>Zn(2+)</name>
        <dbReference type="ChEBI" id="CHEBI:29105"/>
    </cofactor>
    <text evidence="1">Binds 2 Zn(2+) ions per subunit.</text>
</comment>
<comment type="subunit">
    <text evidence="1">The RNAP catalytic core consists of 2 alpha, 1 beta, 1 beta' and 1 omega subunit. When a sigma factor is associated with the core the holoenzyme is formed, which can initiate transcription.</text>
</comment>
<comment type="similarity">
    <text evidence="1">Belongs to the RNA polymerase beta' chain family.</text>
</comment>
<feature type="chain" id="PRO_1000141773" description="DNA-directed RNA polymerase subunit beta'">
    <location>
        <begin position="1"/>
        <end position="1296"/>
    </location>
</feature>
<feature type="region of interest" description="Disordered" evidence="2">
    <location>
        <begin position="185"/>
        <end position="204"/>
    </location>
</feature>
<feature type="compositionally biased region" description="Basic and acidic residues" evidence="2">
    <location>
        <begin position="185"/>
        <end position="202"/>
    </location>
</feature>
<feature type="binding site" evidence="1">
    <location>
        <position position="60"/>
    </location>
    <ligand>
        <name>Zn(2+)</name>
        <dbReference type="ChEBI" id="CHEBI:29105"/>
        <label>1</label>
    </ligand>
</feature>
<feature type="binding site" evidence="1">
    <location>
        <position position="62"/>
    </location>
    <ligand>
        <name>Zn(2+)</name>
        <dbReference type="ChEBI" id="CHEBI:29105"/>
        <label>1</label>
    </ligand>
</feature>
<feature type="binding site" evidence="1">
    <location>
        <position position="75"/>
    </location>
    <ligand>
        <name>Zn(2+)</name>
        <dbReference type="ChEBI" id="CHEBI:29105"/>
        <label>1</label>
    </ligand>
</feature>
<feature type="binding site" evidence="1">
    <location>
        <position position="78"/>
    </location>
    <ligand>
        <name>Zn(2+)</name>
        <dbReference type="ChEBI" id="CHEBI:29105"/>
        <label>1</label>
    </ligand>
</feature>
<feature type="binding site" evidence="1">
    <location>
        <position position="535"/>
    </location>
    <ligand>
        <name>Mg(2+)</name>
        <dbReference type="ChEBI" id="CHEBI:18420"/>
    </ligand>
</feature>
<feature type="binding site" evidence="1">
    <location>
        <position position="537"/>
    </location>
    <ligand>
        <name>Mg(2+)</name>
        <dbReference type="ChEBI" id="CHEBI:18420"/>
    </ligand>
</feature>
<feature type="binding site" evidence="1">
    <location>
        <position position="539"/>
    </location>
    <ligand>
        <name>Mg(2+)</name>
        <dbReference type="ChEBI" id="CHEBI:18420"/>
    </ligand>
</feature>
<feature type="binding site" evidence="1">
    <location>
        <position position="877"/>
    </location>
    <ligand>
        <name>Zn(2+)</name>
        <dbReference type="ChEBI" id="CHEBI:29105"/>
        <label>2</label>
    </ligand>
</feature>
<feature type="binding site" evidence="1">
    <location>
        <position position="954"/>
    </location>
    <ligand>
        <name>Zn(2+)</name>
        <dbReference type="ChEBI" id="CHEBI:29105"/>
        <label>2</label>
    </ligand>
</feature>
<feature type="binding site" evidence="1">
    <location>
        <position position="961"/>
    </location>
    <ligand>
        <name>Zn(2+)</name>
        <dbReference type="ChEBI" id="CHEBI:29105"/>
        <label>2</label>
    </ligand>
</feature>
<feature type="binding site" evidence="1">
    <location>
        <position position="964"/>
    </location>
    <ligand>
        <name>Zn(2+)</name>
        <dbReference type="ChEBI" id="CHEBI:29105"/>
        <label>2</label>
    </ligand>
</feature>
<keyword id="KW-0240">DNA-directed RNA polymerase</keyword>
<keyword id="KW-0460">Magnesium</keyword>
<keyword id="KW-0479">Metal-binding</keyword>
<keyword id="KW-0548">Nucleotidyltransferase</keyword>
<keyword id="KW-1185">Reference proteome</keyword>
<keyword id="KW-0804">Transcription</keyword>
<keyword id="KW-0808">Transferase</keyword>
<keyword id="KW-0862">Zinc</keyword>
<reference key="1">
    <citation type="journal article" date="2008" name="J. Bacteriol.">
        <title>Complete genome sequence of the soil actinomycete Kocuria rhizophila.</title>
        <authorList>
            <person name="Takarada H."/>
            <person name="Sekine M."/>
            <person name="Kosugi H."/>
            <person name="Matsuo Y."/>
            <person name="Fujisawa T."/>
            <person name="Omata S."/>
            <person name="Kishi E."/>
            <person name="Shimizu A."/>
            <person name="Tsukatani N."/>
            <person name="Tanikawa S."/>
            <person name="Fujita N."/>
            <person name="Harayama S."/>
        </authorList>
    </citation>
    <scope>NUCLEOTIDE SEQUENCE [LARGE SCALE GENOMIC DNA]</scope>
    <source>
        <strain>ATCC 9341 / DSM 348 / NBRC 103217 / DC2201</strain>
    </source>
</reference>
<accession>B2GIK0</accession>